<evidence type="ECO:0000255" key="1"/>
<evidence type="ECO:0000255" key="2">
    <source>
        <dbReference type="PROSITE-ProRule" id="PRU00039"/>
    </source>
</evidence>
<evidence type="ECO:0000269" key="3">
    <source>
    </source>
</evidence>
<evidence type="ECO:0000269" key="4">
    <source>
    </source>
</evidence>
<evidence type="ECO:0000269" key="5">
    <source>
    </source>
</evidence>
<evidence type="ECO:0000269" key="6">
    <source>
    </source>
</evidence>
<evidence type="ECO:0000269" key="7">
    <source>
    </source>
</evidence>
<evidence type="ECO:0000269" key="8">
    <source>
    </source>
</evidence>
<evidence type="ECO:0000269" key="9">
    <source>
    </source>
</evidence>
<evidence type="ECO:0000269" key="10">
    <source>
    </source>
</evidence>
<evidence type="ECO:0000269" key="11">
    <source>
    </source>
</evidence>
<evidence type="ECO:0000269" key="12">
    <source>
    </source>
</evidence>
<evidence type="ECO:0000269" key="13">
    <source>
    </source>
</evidence>
<evidence type="ECO:0000269" key="14">
    <source>
    </source>
</evidence>
<evidence type="ECO:0000269" key="15">
    <source>
    </source>
</evidence>
<evidence type="ECO:0000269" key="16">
    <source>
    </source>
</evidence>
<evidence type="ECO:0000269" key="17">
    <source>
    </source>
</evidence>
<evidence type="ECO:0000269" key="18">
    <source>
    </source>
</evidence>
<evidence type="ECO:0000269" key="19">
    <source>
    </source>
</evidence>
<evidence type="ECO:0000269" key="20">
    <source>
    </source>
</evidence>
<evidence type="ECO:0000269" key="21">
    <source>
    </source>
</evidence>
<evidence type="ECO:0000269" key="22">
    <source>
    </source>
</evidence>
<evidence type="ECO:0000269" key="23">
    <source>
    </source>
</evidence>
<evidence type="ECO:0000269" key="24">
    <source>
    </source>
</evidence>
<evidence type="ECO:0000269" key="25">
    <source>
    </source>
</evidence>
<evidence type="ECO:0000269" key="26">
    <source>
    </source>
</evidence>
<evidence type="ECO:0000269" key="27">
    <source>
    </source>
</evidence>
<evidence type="ECO:0000269" key="28">
    <source>
    </source>
</evidence>
<evidence type="ECO:0000269" key="29">
    <source>
    </source>
</evidence>
<evidence type="ECO:0000269" key="30">
    <source>
    </source>
</evidence>
<evidence type="ECO:0000269" key="31">
    <source>
    </source>
</evidence>
<evidence type="ECO:0000269" key="32">
    <source>
    </source>
</evidence>
<evidence type="ECO:0000269" key="33">
    <source>
    </source>
</evidence>
<evidence type="ECO:0000269" key="34">
    <source>
    </source>
</evidence>
<evidence type="ECO:0000269" key="35">
    <source>
    </source>
</evidence>
<evidence type="ECO:0000269" key="36">
    <source>
    </source>
</evidence>
<evidence type="ECO:0000269" key="37">
    <source>
    </source>
</evidence>
<evidence type="ECO:0007829" key="38">
    <source>
        <dbReference type="PDB" id="5BQ8"/>
    </source>
</evidence>
<evidence type="ECO:0007829" key="39">
    <source>
        <dbReference type="PDB" id="5BQB"/>
    </source>
</evidence>
<gene>
    <name type="primary">NDP</name>
    <name type="synonym">EVR2</name>
</gene>
<dbReference type="EMBL" id="X65724">
    <property type="protein sequence ID" value="CAA46639.1"/>
    <property type="molecule type" value="mRNA"/>
</dbReference>
<dbReference type="EMBL" id="X65882">
    <property type="protein sequence ID" value="CAA46713.1"/>
    <property type="molecule type" value="mRNA"/>
</dbReference>
<dbReference type="EMBL" id="AL034370">
    <property type="status" value="NOT_ANNOTATED_CDS"/>
    <property type="molecule type" value="Genomic_DNA"/>
</dbReference>
<dbReference type="EMBL" id="AK313409">
    <property type="protein sequence ID" value="BAG36203.1"/>
    <property type="molecule type" value="mRNA"/>
</dbReference>
<dbReference type="EMBL" id="BC029901">
    <property type="protein sequence ID" value="AAH29901.1"/>
    <property type="molecule type" value="mRNA"/>
</dbReference>
<dbReference type="CCDS" id="CCDS14262.1"/>
<dbReference type="PIR" id="A57005">
    <property type="entry name" value="A57005"/>
</dbReference>
<dbReference type="RefSeq" id="NP_000257.1">
    <property type="nucleotide sequence ID" value="NM_000266.4"/>
</dbReference>
<dbReference type="PDB" id="4MY2">
    <property type="method" value="X-ray"/>
    <property type="resolution" value="2.40 A"/>
    <property type="chains" value="A=30-133"/>
</dbReference>
<dbReference type="PDB" id="5BPU">
    <property type="method" value="X-ray"/>
    <property type="resolution" value="2.40 A"/>
    <property type="chains" value="A/B/C/D/E/F=25-133"/>
</dbReference>
<dbReference type="PDB" id="5BQ8">
    <property type="method" value="X-ray"/>
    <property type="resolution" value="2.00 A"/>
    <property type="chains" value="A/B/C/D=25-133"/>
</dbReference>
<dbReference type="PDB" id="5BQB">
    <property type="method" value="X-ray"/>
    <property type="resolution" value="2.30 A"/>
    <property type="chains" value="A/B/C/D=25-133"/>
</dbReference>
<dbReference type="PDB" id="5BQC">
    <property type="method" value="X-ray"/>
    <property type="resolution" value="3.00 A"/>
    <property type="chains" value="A=25-133"/>
</dbReference>
<dbReference type="PDB" id="5BQE">
    <property type="method" value="X-ray"/>
    <property type="resolution" value="2.30 A"/>
    <property type="chains" value="A/B=25-133"/>
</dbReference>
<dbReference type="PDB" id="5CL1">
    <property type="method" value="X-ray"/>
    <property type="resolution" value="3.80 A"/>
    <property type="chains" value="A/B=31-133"/>
</dbReference>
<dbReference type="PDB" id="8WVX">
    <property type="method" value="EM"/>
    <property type="resolution" value="3.32 A"/>
    <property type="chains" value="C/D=31-133"/>
</dbReference>
<dbReference type="PDB" id="8WVY">
    <property type="method" value="EM"/>
    <property type="resolution" value="3.29 A"/>
    <property type="chains" value="E/F=31-133"/>
</dbReference>
<dbReference type="PDBsum" id="4MY2"/>
<dbReference type="PDBsum" id="5BPU"/>
<dbReference type="PDBsum" id="5BQ8"/>
<dbReference type="PDBsum" id="5BQB"/>
<dbReference type="PDBsum" id="5BQC"/>
<dbReference type="PDBsum" id="5BQE"/>
<dbReference type="PDBsum" id="5CL1"/>
<dbReference type="PDBsum" id="8WVX"/>
<dbReference type="PDBsum" id="8WVY"/>
<dbReference type="EMDB" id="EMD-37875"/>
<dbReference type="EMDB" id="EMD-37876"/>
<dbReference type="SMR" id="Q00604"/>
<dbReference type="BioGRID" id="110773">
    <property type="interactions" value="35"/>
</dbReference>
<dbReference type="CORUM" id="Q00604"/>
<dbReference type="FunCoup" id="Q00604">
    <property type="interactions" value="71"/>
</dbReference>
<dbReference type="IntAct" id="Q00604">
    <property type="interactions" value="31"/>
</dbReference>
<dbReference type="STRING" id="9606.ENSP00000495811"/>
<dbReference type="iPTMnet" id="Q00604"/>
<dbReference type="PhosphoSitePlus" id="Q00604"/>
<dbReference type="BioMuta" id="NDP"/>
<dbReference type="DMDM" id="548342"/>
<dbReference type="MassIVE" id="Q00604"/>
<dbReference type="PaxDb" id="9606-ENSP00000367301"/>
<dbReference type="PeptideAtlas" id="Q00604"/>
<dbReference type="ProteomicsDB" id="57861"/>
<dbReference type="Antibodypedia" id="514">
    <property type="antibodies" value="173 antibodies from 31 providers"/>
</dbReference>
<dbReference type="DNASU" id="4693"/>
<dbReference type="Ensembl" id="ENST00000642620.1">
    <property type="protein sequence ID" value="ENSP00000495972.1"/>
    <property type="gene ID" value="ENSG00000124479.11"/>
</dbReference>
<dbReference type="Ensembl" id="ENST00000647044.1">
    <property type="protein sequence ID" value="ENSP00000495811.1"/>
    <property type="gene ID" value="ENSG00000124479.11"/>
</dbReference>
<dbReference type="GeneID" id="4693"/>
<dbReference type="KEGG" id="hsa:4693"/>
<dbReference type="MANE-Select" id="ENST00000642620.1">
    <property type="protein sequence ID" value="ENSP00000495972.1"/>
    <property type="RefSeq nucleotide sequence ID" value="NM_000266.4"/>
    <property type="RefSeq protein sequence ID" value="NP_000257.1"/>
</dbReference>
<dbReference type="UCSC" id="uc004dga.5">
    <property type="organism name" value="human"/>
</dbReference>
<dbReference type="AGR" id="HGNC:7678"/>
<dbReference type="CTD" id="4693"/>
<dbReference type="DisGeNET" id="4693"/>
<dbReference type="GeneCards" id="NDP"/>
<dbReference type="GeneReviews" id="NDP"/>
<dbReference type="HGNC" id="HGNC:7678">
    <property type="gene designation" value="NDP"/>
</dbReference>
<dbReference type="HPA" id="ENSG00000124479">
    <property type="expression patterns" value="Tissue enhanced (brain, ovary)"/>
</dbReference>
<dbReference type="MalaCards" id="NDP"/>
<dbReference type="MIM" id="300658">
    <property type="type" value="gene"/>
</dbReference>
<dbReference type="MIM" id="305390">
    <property type="type" value="phenotype"/>
</dbReference>
<dbReference type="MIM" id="310600">
    <property type="type" value="phenotype"/>
</dbReference>
<dbReference type="neXtProt" id="NX_Q00604"/>
<dbReference type="OpenTargets" id="ENSG00000124479"/>
<dbReference type="Orphanet" id="190">
    <property type="disease" value="Coats disease"/>
</dbReference>
<dbReference type="Orphanet" id="891">
    <property type="disease" value="Familial exudative vitreoretinopathy"/>
</dbReference>
<dbReference type="Orphanet" id="649">
    <property type="disease" value="Norrie disease"/>
</dbReference>
<dbReference type="Orphanet" id="91495">
    <property type="disease" value="Persistent hyperplastic primary vitreous"/>
</dbReference>
<dbReference type="Orphanet" id="90050">
    <property type="disease" value="Retinopathy of prematurity"/>
</dbReference>
<dbReference type="PharmGKB" id="PA31481"/>
<dbReference type="VEuPathDB" id="HostDB:ENSG00000124479"/>
<dbReference type="eggNOG" id="KOG1216">
    <property type="taxonomic scope" value="Eukaryota"/>
</dbReference>
<dbReference type="GeneTree" id="ENSGT00390000004304"/>
<dbReference type="HOGENOM" id="CLU_153977_0_0_1"/>
<dbReference type="InParanoid" id="Q00604"/>
<dbReference type="OMA" id="NVLMARC"/>
<dbReference type="OrthoDB" id="6059567at2759"/>
<dbReference type="PAN-GO" id="Q00604">
    <property type="GO annotations" value="2 GO annotations based on evolutionary models"/>
</dbReference>
<dbReference type="PhylomeDB" id="Q00604"/>
<dbReference type="PathwayCommons" id="Q00604"/>
<dbReference type="SignaLink" id="Q00604"/>
<dbReference type="SIGNOR" id="Q00604"/>
<dbReference type="BioGRID-ORCS" id="4693">
    <property type="hits" value="11 hits in 769 CRISPR screens"/>
</dbReference>
<dbReference type="ChiTaRS" id="NDP">
    <property type="organism name" value="human"/>
</dbReference>
<dbReference type="EvolutionaryTrace" id="Q00604"/>
<dbReference type="GeneWiki" id="Norrin"/>
<dbReference type="GenomeRNAi" id="4693"/>
<dbReference type="Pharos" id="Q00604">
    <property type="development level" value="Tbio"/>
</dbReference>
<dbReference type="PRO" id="PR:Q00604"/>
<dbReference type="Proteomes" id="UP000005640">
    <property type="component" value="Chromosome X"/>
</dbReference>
<dbReference type="RNAct" id="Q00604">
    <property type="molecule type" value="protein"/>
</dbReference>
<dbReference type="Bgee" id="ENSG00000124479">
    <property type="expression patterns" value="Expressed in cranial nerve II and 154 other cell types or tissues"/>
</dbReference>
<dbReference type="GO" id="GO:0009986">
    <property type="term" value="C:cell surface"/>
    <property type="evidence" value="ECO:0000314"/>
    <property type="project" value="BHF-UCL"/>
</dbReference>
<dbReference type="GO" id="GO:0062023">
    <property type="term" value="C:collagen-containing extracellular matrix"/>
    <property type="evidence" value="ECO:0000314"/>
    <property type="project" value="BHF-UCL"/>
</dbReference>
<dbReference type="GO" id="GO:0005615">
    <property type="term" value="C:extracellular space"/>
    <property type="evidence" value="ECO:0000314"/>
    <property type="project" value="BHF-UCL"/>
</dbReference>
<dbReference type="GO" id="GO:0005125">
    <property type="term" value="F:cytokine activity"/>
    <property type="evidence" value="ECO:0000314"/>
    <property type="project" value="BHF-UCL"/>
</dbReference>
<dbReference type="GO" id="GO:0005109">
    <property type="term" value="F:frizzled binding"/>
    <property type="evidence" value="ECO:0000353"/>
    <property type="project" value="BHF-UCL"/>
</dbReference>
<dbReference type="GO" id="GO:0042803">
    <property type="term" value="F:protein homodimerization activity"/>
    <property type="evidence" value="ECO:0000353"/>
    <property type="project" value="BHF-UCL"/>
</dbReference>
<dbReference type="GO" id="GO:0001508">
    <property type="term" value="P:action potential"/>
    <property type="evidence" value="ECO:0007669"/>
    <property type="project" value="Ensembl"/>
</dbReference>
<dbReference type="GO" id="GO:0001525">
    <property type="term" value="P:angiogenesis"/>
    <property type="evidence" value="ECO:0007669"/>
    <property type="project" value="Ensembl"/>
</dbReference>
<dbReference type="GO" id="GO:0001974">
    <property type="term" value="P:blood vessel remodeling"/>
    <property type="evidence" value="ECO:0007669"/>
    <property type="project" value="Ensembl"/>
</dbReference>
<dbReference type="GO" id="GO:0060070">
    <property type="term" value="P:canonical Wnt signaling pathway"/>
    <property type="evidence" value="ECO:0007669"/>
    <property type="project" value="Ensembl"/>
</dbReference>
<dbReference type="GO" id="GO:0071456">
    <property type="term" value="P:cellular response to hypoxia"/>
    <property type="evidence" value="ECO:0007669"/>
    <property type="project" value="Ensembl"/>
</dbReference>
<dbReference type="GO" id="GO:1904390">
    <property type="term" value="P:cone retinal bipolar cell differentiation"/>
    <property type="evidence" value="ECO:0007669"/>
    <property type="project" value="Ensembl"/>
</dbReference>
<dbReference type="GO" id="GO:0046697">
    <property type="term" value="P:decidualization"/>
    <property type="evidence" value="ECO:0007669"/>
    <property type="project" value="Ensembl"/>
</dbReference>
<dbReference type="GO" id="GO:0060996">
    <property type="term" value="P:dendritic spine development"/>
    <property type="evidence" value="ECO:0007669"/>
    <property type="project" value="Ensembl"/>
</dbReference>
<dbReference type="GO" id="GO:0045446">
    <property type="term" value="P:endothelial cell differentiation"/>
    <property type="evidence" value="ECO:0007669"/>
    <property type="project" value="Ensembl"/>
</dbReference>
<dbReference type="GO" id="GO:0060856">
    <property type="term" value="P:establishment of blood-brain barrier"/>
    <property type="evidence" value="ECO:0007669"/>
    <property type="project" value="Ensembl"/>
</dbReference>
<dbReference type="GO" id="GO:1990963">
    <property type="term" value="P:establishment of blood-retinal barrier"/>
    <property type="evidence" value="ECO:0007669"/>
    <property type="project" value="Ensembl"/>
</dbReference>
<dbReference type="GO" id="GO:0035640">
    <property type="term" value="P:exploration behavior"/>
    <property type="evidence" value="ECO:0007669"/>
    <property type="project" value="Ensembl"/>
</dbReference>
<dbReference type="GO" id="GO:0035426">
    <property type="term" value="P:extracellular matrix-cell signaling"/>
    <property type="evidence" value="ECO:0007669"/>
    <property type="project" value="Ensembl"/>
</dbReference>
<dbReference type="GO" id="GO:0006749">
    <property type="term" value="P:glutathione metabolic process"/>
    <property type="evidence" value="ECO:0007669"/>
    <property type="project" value="Ensembl"/>
</dbReference>
<dbReference type="GO" id="GO:0006544">
    <property type="term" value="P:glycine metabolic process"/>
    <property type="evidence" value="ECO:0007669"/>
    <property type="project" value="Ensembl"/>
</dbReference>
<dbReference type="GO" id="GO:0006954">
    <property type="term" value="P:inflammatory response"/>
    <property type="evidence" value="ECO:0007669"/>
    <property type="project" value="Ensembl"/>
</dbReference>
<dbReference type="GO" id="GO:0002088">
    <property type="term" value="P:lens development in camera-type eye"/>
    <property type="evidence" value="ECO:0007669"/>
    <property type="project" value="Ensembl"/>
</dbReference>
<dbReference type="GO" id="GO:0014004">
    <property type="term" value="P:microglia differentiation"/>
    <property type="evidence" value="ECO:0007669"/>
    <property type="project" value="Ensembl"/>
</dbReference>
<dbReference type="GO" id="GO:0061518">
    <property type="term" value="P:microglial cell proliferation"/>
    <property type="evidence" value="ECO:0007669"/>
    <property type="project" value="Ensembl"/>
</dbReference>
<dbReference type="GO" id="GO:0000278">
    <property type="term" value="P:mitotic cell cycle"/>
    <property type="evidence" value="ECO:0007669"/>
    <property type="project" value="Ensembl"/>
</dbReference>
<dbReference type="GO" id="GO:0007399">
    <property type="term" value="P:nervous system development"/>
    <property type="evidence" value="ECO:0000304"/>
    <property type="project" value="ProtInc"/>
</dbReference>
<dbReference type="GO" id="GO:0051402">
    <property type="term" value="P:neuron apoptotic process"/>
    <property type="evidence" value="ECO:0007669"/>
    <property type="project" value="Ensembl"/>
</dbReference>
<dbReference type="GO" id="GO:0110135">
    <property type="term" value="P:Norrin signaling pathway"/>
    <property type="evidence" value="ECO:0000314"/>
    <property type="project" value="BHF-UCL"/>
</dbReference>
<dbReference type="GO" id="GO:0021554">
    <property type="term" value="P:optic nerve development"/>
    <property type="evidence" value="ECO:0007669"/>
    <property type="project" value="Ensembl"/>
</dbReference>
<dbReference type="GO" id="GO:0045893">
    <property type="term" value="P:positive regulation of DNA-templated transcription"/>
    <property type="evidence" value="ECO:0000314"/>
    <property type="project" value="BHF-UCL"/>
</dbReference>
<dbReference type="GO" id="GO:0051897">
    <property type="term" value="P:positive regulation of phosphatidylinositol 3-kinase/protein kinase B signal transduction"/>
    <property type="evidence" value="ECO:0007669"/>
    <property type="project" value="Ensembl"/>
</dbReference>
<dbReference type="GO" id="GO:0045944">
    <property type="term" value="P:positive regulation of transcription by RNA polymerase II"/>
    <property type="evidence" value="ECO:0000314"/>
    <property type="project" value="BHF-UCL"/>
</dbReference>
<dbReference type="GO" id="GO:0006622">
    <property type="term" value="P:protein targeting to lysosome"/>
    <property type="evidence" value="ECO:0007669"/>
    <property type="project" value="Ensembl"/>
</dbReference>
<dbReference type="GO" id="GO:0016567">
    <property type="term" value="P:protein ubiquitination"/>
    <property type="evidence" value="ECO:0007669"/>
    <property type="project" value="Ensembl"/>
</dbReference>
<dbReference type="GO" id="GO:0000320">
    <property type="term" value="P:re-entry into mitotic cell cycle"/>
    <property type="evidence" value="ECO:0007669"/>
    <property type="project" value="Ensembl"/>
</dbReference>
<dbReference type="GO" id="GO:0048678">
    <property type="term" value="P:response to axon injury"/>
    <property type="evidence" value="ECO:0007669"/>
    <property type="project" value="Ensembl"/>
</dbReference>
<dbReference type="GO" id="GO:0097601">
    <property type="term" value="P:retina blood vessel maintenance"/>
    <property type="evidence" value="ECO:0007669"/>
    <property type="project" value="Ensembl"/>
</dbReference>
<dbReference type="GO" id="GO:0010842">
    <property type="term" value="P:retina layer formation"/>
    <property type="evidence" value="ECO:0007669"/>
    <property type="project" value="Ensembl"/>
</dbReference>
<dbReference type="GO" id="GO:0061304">
    <property type="term" value="P:retinal blood vessel morphogenesis"/>
    <property type="evidence" value="ECO:0007669"/>
    <property type="project" value="Ensembl"/>
</dbReference>
<dbReference type="GO" id="GO:0031290">
    <property type="term" value="P:retinal ganglion cell axon guidance"/>
    <property type="evidence" value="ECO:0007669"/>
    <property type="project" value="Ensembl"/>
</dbReference>
<dbReference type="GO" id="GO:0003406">
    <property type="term" value="P:retinal pigment epithelium development"/>
    <property type="evidence" value="ECO:0007669"/>
    <property type="project" value="Ensembl"/>
</dbReference>
<dbReference type="GO" id="GO:0060221">
    <property type="term" value="P:retinal rod cell differentiation"/>
    <property type="evidence" value="ECO:0007669"/>
    <property type="project" value="Ensembl"/>
</dbReference>
<dbReference type="GO" id="GO:0007224">
    <property type="term" value="P:smoothened signaling pathway"/>
    <property type="evidence" value="ECO:0007669"/>
    <property type="project" value="Ensembl"/>
</dbReference>
<dbReference type="GO" id="GO:0006366">
    <property type="term" value="P:transcription by RNA polymerase II"/>
    <property type="evidence" value="ECO:0007669"/>
    <property type="project" value="Ensembl"/>
</dbReference>
<dbReference type="GO" id="GO:0007179">
    <property type="term" value="P:transforming growth factor beta receptor signaling pathway"/>
    <property type="evidence" value="ECO:0007669"/>
    <property type="project" value="Ensembl"/>
</dbReference>
<dbReference type="GO" id="GO:0006099">
    <property type="term" value="P:tricarboxylic acid cycle"/>
    <property type="evidence" value="ECO:0007669"/>
    <property type="project" value="Ensembl"/>
</dbReference>
<dbReference type="GO" id="GO:0070086">
    <property type="term" value="P:ubiquitin-dependent endocytosis"/>
    <property type="evidence" value="ECO:0007669"/>
    <property type="project" value="Ensembl"/>
</dbReference>
<dbReference type="GO" id="GO:0007033">
    <property type="term" value="P:vacuole organization"/>
    <property type="evidence" value="ECO:0000304"/>
    <property type="project" value="ProtInc"/>
</dbReference>
<dbReference type="GO" id="GO:0007601">
    <property type="term" value="P:visual perception"/>
    <property type="evidence" value="ECO:0000304"/>
    <property type="project" value="ProtInc"/>
</dbReference>
<dbReference type="FunFam" id="2.10.90.10:FF:000022">
    <property type="entry name" value="Norrin"/>
    <property type="match status" value="1"/>
</dbReference>
<dbReference type="Gene3D" id="2.10.90.10">
    <property type="entry name" value="Cystine-knot cytokines"/>
    <property type="match status" value="1"/>
</dbReference>
<dbReference type="InterPro" id="IPR006207">
    <property type="entry name" value="Cys_knot_C"/>
</dbReference>
<dbReference type="InterPro" id="IPR029034">
    <property type="entry name" value="Cystine-knot_cytokine"/>
</dbReference>
<dbReference type="InterPro" id="IPR006208">
    <property type="entry name" value="Glyco_hormone_CN"/>
</dbReference>
<dbReference type="InterPro" id="IPR003064">
    <property type="entry name" value="Norrie_dis"/>
</dbReference>
<dbReference type="PANTHER" id="PTHR28611">
    <property type="entry name" value="NORRIN"/>
    <property type="match status" value="1"/>
</dbReference>
<dbReference type="PANTHER" id="PTHR28611:SF1">
    <property type="entry name" value="NORRIN"/>
    <property type="match status" value="1"/>
</dbReference>
<dbReference type="Pfam" id="PF00007">
    <property type="entry name" value="Cys_knot"/>
    <property type="match status" value="1"/>
</dbReference>
<dbReference type="PRINTS" id="PR01304">
    <property type="entry name" value="NORRIEDSEASE"/>
</dbReference>
<dbReference type="SMART" id="SM00041">
    <property type="entry name" value="CT"/>
    <property type="match status" value="1"/>
</dbReference>
<dbReference type="PROSITE" id="PS01185">
    <property type="entry name" value="CTCK_1"/>
    <property type="match status" value="1"/>
</dbReference>
<dbReference type="PROSITE" id="PS01225">
    <property type="entry name" value="CTCK_2"/>
    <property type="match status" value="1"/>
</dbReference>
<accession>Q00604</accession>
<accession>B2R8K6</accession>
<accession>Q5JYH5</accession>
<reference key="1">
    <citation type="journal article" date="1992" name="Nat. Genet.">
        <title>Isolation of a candidate gene for Norrie disease by positional cloning.</title>
        <authorList>
            <person name="Berger W."/>
            <person name="Meindl A."/>
            <person name="van de Pol T.J.R."/>
            <person name="Cremers F.P.M."/>
            <person name="Ropers H.-H."/>
            <person name="Doerner C."/>
            <person name="Monaco A."/>
            <person name="Bergen A.A.B."/>
            <person name="Lebo R."/>
            <person name="Warburg M."/>
            <person name="Zergollern L."/>
            <person name="Lorenz B."/>
            <person name="Gal A."/>
            <person name="Bleeker-Wagemakers E.M."/>
            <person name="Meitinger T."/>
        </authorList>
    </citation>
    <scope>NUCLEOTIDE SEQUENCE [MRNA]</scope>
    <source>
        <tissue>Retina</tissue>
    </source>
</reference>
<reference key="2">
    <citation type="journal article" date="1992" name="Nat. Genet.">
        <authorList>
            <person name="Berger W."/>
            <person name="Meindl A."/>
            <person name="van de Pol T.J.R."/>
            <person name="Cremers F.P.M."/>
            <person name="Ropers H.-H."/>
            <person name="Doerner C."/>
            <person name="Monaco A."/>
            <person name="Bergen A.A.B."/>
            <person name="Lebo R."/>
            <person name="Warburg M."/>
            <person name="Zergollern L."/>
            <person name="Lorenz B."/>
            <person name="Gal A."/>
            <person name="Bleeker-Wagemakers E.M."/>
            <person name="Meitinger T."/>
        </authorList>
    </citation>
    <scope>ERRATUM OF PUBMED:1303235</scope>
</reference>
<reference key="3">
    <citation type="journal article" date="1992" name="Nat. Genet.">
        <title>Isolation and characterization of a candidate gene for Norrie disease.</title>
        <authorList>
            <person name="Chen Z.-Y."/>
            <person name="Hendriks R.W."/>
            <person name="Jobling M.A."/>
            <person name="Powell J.F."/>
            <person name="Breakfield X.O."/>
            <person name="Sims K.B."/>
            <person name="Craig I.W."/>
        </authorList>
    </citation>
    <scope>NUCLEOTIDE SEQUENCE [MRNA]</scope>
    <source>
        <tissue>Fetal retina</tissue>
    </source>
</reference>
<reference key="4">
    <citation type="journal article" date="2004" name="Nat. Genet.">
        <title>Complete sequencing and characterization of 21,243 full-length human cDNAs.</title>
        <authorList>
            <person name="Ota T."/>
            <person name="Suzuki Y."/>
            <person name="Nishikawa T."/>
            <person name="Otsuki T."/>
            <person name="Sugiyama T."/>
            <person name="Irie R."/>
            <person name="Wakamatsu A."/>
            <person name="Hayashi K."/>
            <person name="Sato H."/>
            <person name="Nagai K."/>
            <person name="Kimura K."/>
            <person name="Makita H."/>
            <person name="Sekine M."/>
            <person name="Obayashi M."/>
            <person name="Nishi T."/>
            <person name="Shibahara T."/>
            <person name="Tanaka T."/>
            <person name="Ishii S."/>
            <person name="Yamamoto J."/>
            <person name="Saito K."/>
            <person name="Kawai Y."/>
            <person name="Isono Y."/>
            <person name="Nakamura Y."/>
            <person name="Nagahari K."/>
            <person name="Murakami K."/>
            <person name="Yasuda T."/>
            <person name="Iwayanagi T."/>
            <person name="Wagatsuma M."/>
            <person name="Shiratori A."/>
            <person name="Sudo H."/>
            <person name="Hosoiri T."/>
            <person name="Kaku Y."/>
            <person name="Kodaira H."/>
            <person name="Kondo H."/>
            <person name="Sugawara M."/>
            <person name="Takahashi M."/>
            <person name="Kanda K."/>
            <person name="Yokoi T."/>
            <person name="Furuya T."/>
            <person name="Kikkawa E."/>
            <person name="Omura Y."/>
            <person name="Abe K."/>
            <person name="Kamihara K."/>
            <person name="Katsuta N."/>
            <person name="Sato K."/>
            <person name="Tanikawa M."/>
            <person name="Yamazaki M."/>
            <person name="Ninomiya K."/>
            <person name="Ishibashi T."/>
            <person name="Yamashita H."/>
            <person name="Murakawa K."/>
            <person name="Fujimori K."/>
            <person name="Tanai H."/>
            <person name="Kimata M."/>
            <person name="Watanabe M."/>
            <person name="Hiraoka S."/>
            <person name="Chiba Y."/>
            <person name="Ishida S."/>
            <person name="Ono Y."/>
            <person name="Takiguchi S."/>
            <person name="Watanabe S."/>
            <person name="Yosida M."/>
            <person name="Hotuta T."/>
            <person name="Kusano J."/>
            <person name="Kanehori K."/>
            <person name="Takahashi-Fujii A."/>
            <person name="Hara H."/>
            <person name="Tanase T.-O."/>
            <person name="Nomura Y."/>
            <person name="Togiya S."/>
            <person name="Komai F."/>
            <person name="Hara R."/>
            <person name="Takeuchi K."/>
            <person name="Arita M."/>
            <person name="Imose N."/>
            <person name="Musashino K."/>
            <person name="Yuuki H."/>
            <person name="Oshima A."/>
            <person name="Sasaki N."/>
            <person name="Aotsuka S."/>
            <person name="Yoshikawa Y."/>
            <person name="Matsunawa H."/>
            <person name="Ichihara T."/>
            <person name="Shiohata N."/>
            <person name="Sano S."/>
            <person name="Moriya S."/>
            <person name="Momiyama H."/>
            <person name="Satoh N."/>
            <person name="Takami S."/>
            <person name="Terashima Y."/>
            <person name="Suzuki O."/>
            <person name="Nakagawa S."/>
            <person name="Senoh A."/>
            <person name="Mizoguchi H."/>
            <person name="Goto Y."/>
            <person name="Shimizu F."/>
            <person name="Wakebe H."/>
            <person name="Hishigaki H."/>
            <person name="Watanabe T."/>
            <person name="Sugiyama A."/>
            <person name="Takemoto M."/>
            <person name="Kawakami B."/>
            <person name="Yamazaki M."/>
            <person name="Watanabe K."/>
            <person name="Kumagai A."/>
            <person name="Itakura S."/>
            <person name="Fukuzumi Y."/>
            <person name="Fujimori Y."/>
            <person name="Komiyama M."/>
            <person name="Tashiro H."/>
            <person name="Tanigami A."/>
            <person name="Fujiwara T."/>
            <person name="Ono T."/>
            <person name="Yamada K."/>
            <person name="Fujii Y."/>
            <person name="Ozaki K."/>
            <person name="Hirao M."/>
            <person name="Ohmori Y."/>
            <person name="Kawabata A."/>
            <person name="Hikiji T."/>
            <person name="Kobatake N."/>
            <person name="Inagaki H."/>
            <person name="Ikema Y."/>
            <person name="Okamoto S."/>
            <person name="Okitani R."/>
            <person name="Kawakami T."/>
            <person name="Noguchi S."/>
            <person name="Itoh T."/>
            <person name="Shigeta K."/>
            <person name="Senba T."/>
            <person name="Matsumura K."/>
            <person name="Nakajima Y."/>
            <person name="Mizuno T."/>
            <person name="Morinaga M."/>
            <person name="Sasaki M."/>
            <person name="Togashi T."/>
            <person name="Oyama M."/>
            <person name="Hata H."/>
            <person name="Watanabe M."/>
            <person name="Komatsu T."/>
            <person name="Mizushima-Sugano J."/>
            <person name="Satoh T."/>
            <person name="Shirai Y."/>
            <person name="Takahashi Y."/>
            <person name="Nakagawa K."/>
            <person name="Okumura K."/>
            <person name="Nagase T."/>
            <person name="Nomura N."/>
            <person name="Kikuchi H."/>
            <person name="Masuho Y."/>
            <person name="Yamashita R."/>
            <person name="Nakai K."/>
            <person name="Yada T."/>
            <person name="Nakamura Y."/>
            <person name="Ohara O."/>
            <person name="Isogai T."/>
            <person name="Sugano S."/>
        </authorList>
    </citation>
    <scope>NUCLEOTIDE SEQUENCE [LARGE SCALE MRNA]</scope>
    <source>
        <tissue>Uterus</tissue>
    </source>
</reference>
<reference key="5">
    <citation type="journal article" date="2005" name="Nature">
        <title>The DNA sequence of the human X chromosome.</title>
        <authorList>
            <person name="Ross M.T."/>
            <person name="Grafham D.V."/>
            <person name="Coffey A.J."/>
            <person name="Scherer S."/>
            <person name="McLay K."/>
            <person name="Muzny D."/>
            <person name="Platzer M."/>
            <person name="Howell G.R."/>
            <person name="Burrows C."/>
            <person name="Bird C.P."/>
            <person name="Frankish A."/>
            <person name="Lovell F.L."/>
            <person name="Howe K.L."/>
            <person name="Ashurst J.L."/>
            <person name="Fulton R.S."/>
            <person name="Sudbrak R."/>
            <person name="Wen G."/>
            <person name="Jones M.C."/>
            <person name="Hurles M.E."/>
            <person name="Andrews T.D."/>
            <person name="Scott C.E."/>
            <person name="Searle S."/>
            <person name="Ramser J."/>
            <person name="Whittaker A."/>
            <person name="Deadman R."/>
            <person name="Carter N.P."/>
            <person name="Hunt S.E."/>
            <person name="Chen R."/>
            <person name="Cree A."/>
            <person name="Gunaratne P."/>
            <person name="Havlak P."/>
            <person name="Hodgson A."/>
            <person name="Metzker M.L."/>
            <person name="Richards S."/>
            <person name="Scott G."/>
            <person name="Steffen D."/>
            <person name="Sodergren E."/>
            <person name="Wheeler D.A."/>
            <person name="Worley K.C."/>
            <person name="Ainscough R."/>
            <person name="Ambrose K.D."/>
            <person name="Ansari-Lari M.A."/>
            <person name="Aradhya S."/>
            <person name="Ashwell R.I."/>
            <person name="Babbage A.K."/>
            <person name="Bagguley C.L."/>
            <person name="Ballabio A."/>
            <person name="Banerjee R."/>
            <person name="Barker G.E."/>
            <person name="Barlow K.F."/>
            <person name="Barrett I.P."/>
            <person name="Bates K.N."/>
            <person name="Beare D.M."/>
            <person name="Beasley H."/>
            <person name="Beasley O."/>
            <person name="Beck A."/>
            <person name="Bethel G."/>
            <person name="Blechschmidt K."/>
            <person name="Brady N."/>
            <person name="Bray-Allen S."/>
            <person name="Bridgeman A.M."/>
            <person name="Brown A.J."/>
            <person name="Brown M.J."/>
            <person name="Bonnin D."/>
            <person name="Bruford E.A."/>
            <person name="Buhay C."/>
            <person name="Burch P."/>
            <person name="Burford D."/>
            <person name="Burgess J."/>
            <person name="Burrill W."/>
            <person name="Burton J."/>
            <person name="Bye J.M."/>
            <person name="Carder C."/>
            <person name="Carrel L."/>
            <person name="Chako J."/>
            <person name="Chapman J.C."/>
            <person name="Chavez D."/>
            <person name="Chen E."/>
            <person name="Chen G."/>
            <person name="Chen Y."/>
            <person name="Chen Z."/>
            <person name="Chinault C."/>
            <person name="Ciccodicola A."/>
            <person name="Clark S.Y."/>
            <person name="Clarke G."/>
            <person name="Clee C.M."/>
            <person name="Clegg S."/>
            <person name="Clerc-Blankenburg K."/>
            <person name="Clifford K."/>
            <person name="Cobley V."/>
            <person name="Cole C.G."/>
            <person name="Conquer J.S."/>
            <person name="Corby N."/>
            <person name="Connor R.E."/>
            <person name="David R."/>
            <person name="Davies J."/>
            <person name="Davis C."/>
            <person name="Davis J."/>
            <person name="Delgado O."/>
            <person name="Deshazo D."/>
            <person name="Dhami P."/>
            <person name="Ding Y."/>
            <person name="Dinh H."/>
            <person name="Dodsworth S."/>
            <person name="Draper H."/>
            <person name="Dugan-Rocha S."/>
            <person name="Dunham A."/>
            <person name="Dunn M."/>
            <person name="Durbin K.J."/>
            <person name="Dutta I."/>
            <person name="Eades T."/>
            <person name="Ellwood M."/>
            <person name="Emery-Cohen A."/>
            <person name="Errington H."/>
            <person name="Evans K.L."/>
            <person name="Faulkner L."/>
            <person name="Francis F."/>
            <person name="Frankland J."/>
            <person name="Fraser A.E."/>
            <person name="Galgoczy P."/>
            <person name="Gilbert J."/>
            <person name="Gill R."/>
            <person name="Gloeckner G."/>
            <person name="Gregory S.G."/>
            <person name="Gribble S."/>
            <person name="Griffiths C."/>
            <person name="Grocock R."/>
            <person name="Gu Y."/>
            <person name="Gwilliam R."/>
            <person name="Hamilton C."/>
            <person name="Hart E.A."/>
            <person name="Hawes A."/>
            <person name="Heath P.D."/>
            <person name="Heitmann K."/>
            <person name="Hennig S."/>
            <person name="Hernandez J."/>
            <person name="Hinzmann B."/>
            <person name="Ho S."/>
            <person name="Hoffs M."/>
            <person name="Howden P.J."/>
            <person name="Huckle E.J."/>
            <person name="Hume J."/>
            <person name="Hunt P.J."/>
            <person name="Hunt A.R."/>
            <person name="Isherwood J."/>
            <person name="Jacob L."/>
            <person name="Johnson D."/>
            <person name="Jones S."/>
            <person name="de Jong P.J."/>
            <person name="Joseph S.S."/>
            <person name="Keenan S."/>
            <person name="Kelly S."/>
            <person name="Kershaw J.K."/>
            <person name="Khan Z."/>
            <person name="Kioschis P."/>
            <person name="Klages S."/>
            <person name="Knights A.J."/>
            <person name="Kosiura A."/>
            <person name="Kovar-Smith C."/>
            <person name="Laird G.K."/>
            <person name="Langford C."/>
            <person name="Lawlor S."/>
            <person name="Leversha M."/>
            <person name="Lewis L."/>
            <person name="Liu W."/>
            <person name="Lloyd C."/>
            <person name="Lloyd D.M."/>
            <person name="Loulseged H."/>
            <person name="Loveland J.E."/>
            <person name="Lovell J.D."/>
            <person name="Lozado R."/>
            <person name="Lu J."/>
            <person name="Lyne R."/>
            <person name="Ma J."/>
            <person name="Maheshwari M."/>
            <person name="Matthews L.H."/>
            <person name="McDowall J."/>
            <person name="McLaren S."/>
            <person name="McMurray A."/>
            <person name="Meidl P."/>
            <person name="Meitinger T."/>
            <person name="Milne S."/>
            <person name="Miner G."/>
            <person name="Mistry S.L."/>
            <person name="Morgan M."/>
            <person name="Morris S."/>
            <person name="Mueller I."/>
            <person name="Mullikin J.C."/>
            <person name="Nguyen N."/>
            <person name="Nordsiek G."/>
            <person name="Nyakatura G."/>
            <person name="O'dell C.N."/>
            <person name="Okwuonu G."/>
            <person name="Palmer S."/>
            <person name="Pandian R."/>
            <person name="Parker D."/>
            <person name="Parrish J."/>
            <person name="Pasternak S."/>
            <person name="Patel D."/>
            <person name="Pearce A.V."/>
            <person name="Pearson D.M."/>
            <person name="Pelan S.E."/>
            <person name="Perez L."/>
            <person name="Porter K.M."/>
            <person name="Ramsey Y."/>
            <person name="Reichwald K."/>
            <person name="Rhodes S."/>
            <person name="Ridler K.A."/>
            <person name="Schlessinger D."/>
            <person name="Schueler M.G."/>
            <person name="Sehra H.K."/>
            <person name="Shaw-Smith C."/>
            <person name="Shen H."/>
            <person name="Sheridan E.M."/>
            <person name="Shownkeen R."/>
            <person name="Skuce C.D."/>
            <person name="Smith M.L."/>
            <person name="Sotheran E.C."/>
            <person name="Steingruber H.E."/>
            <person name="Steward C.A."/>
            <person name="Storey R."/>
            <person name="Swann R.M."/>
            <person name="Swarbreck D."/>
            <person name="Tabor P.E."/>
            <person name="Taudien S."/>
            <person name="Taylor T."/>
            <person name="Teague B."/>
            <person name="Thomas K."/>
            <person name="Thorpe A."/>
            <person name="Timms K."/>
            <person name="Tracey A."/>
            <person name="Trevanion S."/>
            <person name="Tromans A.C."/>
            <person name="d'Urso M."/>
            <person name="Verduzco D."/>
            <person name="Villasana D."/>
            <person name="Waldron L."/>
            <person name="Wall M."/>
            <person name="Wang Q."/>
            <person name="Warren J."/>
            <person name="Warry G.L."/>
            <person name="Wei X."/>
            <person name="West A."/>
            <person name="Whitehead S.L."/>
            <person name="Whiteley M.N."/>
            <person name="Wilkinson J.E."/>
            <person name="Willey D.L."/>
            <person name="Williams G."/>
            <person name="Williams L."/>
            <person name="Williamson A."/>
            <person name="Williamson H."/>
            <person name="Wilming L."/>
            <person name="Woodmansey R.L."/>
            <person name="Wray P.W."/>
            <person name="Yen J."/>
            <person name="Zhang J."/>
            <person name="Zhou J."/>
            <person name="Zoghbi H."/>
            <person name="Zorilla S."/>
            <person name="Buck D."/>
            <person name="Reinhardt R."/>
            <person name="Poustka A."/>
            <person name="Rosenthal A."/>
            <person name="Lehrach H."/>
            <person name="Meindl A."/>
            <person name="Minx P.J."/>
            <person name="Hillier L.W."/>
            <person name="Willard H.F."/>
            <person name="Wilson R.K."/>
            <person name="Waterston R.H."/>
            <person name="Rice C.M."/>
            <person name="Vaudin M."/>
            <person name="Coulson A."/>
            <person name="Nelson D.L."/>
            <person name="Weinstock G."/>
            <person name="Sulston J.E."/>
            <person name="Durbin R.M."/>
            <person name="Hubbard T."/>
            <person name="Gibbs R.A."/>
            <person name="Beck S."/>
            <person name="Rogers J."/>
            <person name="Bentley D.R."/>
        </authorList>
    </citation>
    <scope>NUCLEOTIDE SEQUENCE [LARGE SCALE GENOMIC DNA]</scope>
</reference>
<reference key="6">
    <citation type="journal article" date="2004" name="Genome Res.">
        <title>The status, quality, and expansion of the NIH full-length cDNA project: the Mammalian Gene Collection (MGC).</title>
        <authorList>
            <consortium name="The MGC Project Team"/>
        </authorList>
    </citation>
    <scope>NUCLEOTIDE SEQUENCE [LARGE SCALE MRNA]</scope>
    <source>
        <tissue>Brain</tissue>
    </source>
</reference>
<reference key="7">
    <citation type="journal article" date="1997" name="J. Biol. Chem.">
        <title>Norrie disease protein (norrin) forms disulfide-linked oligomers associated with the extracellular matrix.</title>
        <authorList>
            <person name="Perez-Vilar J."/>
            <person name="Hill R.L."/>
        </authorList>
    </citation>
    <scope>SUBCELLULAR LOCATION</scope>
    <scope>OLIGOMERIZATION</scope>
    <scope>MUTAGENESIS OF CYS-95</scope>
    <scope>CHARACTERIZATION OF VARIANTS ND GLU-60 AND GLN-121</scope>
</reference>
<reference key="8">
    <citation type="journal article" date="1999" name="Brain Res. Bull.">
        <title>Localization of the Norrie disease gene mRNA by in situ hybridization.</title>
        <authorList>
            <person name="Hartzer M.K."/>
            <person name="Cheng M."/>
            <person name="Liu X."/>
            <person name="Shastry B.S."/>
        </authorList>
    </citation>
    <scope>TISSUE SPECIFICITY</scope>
</reference>
<reference key="9">
    <citation type="journal article" date="1993" name="Nat. Genet.">
        <title>Molecular modelling of the Norrie disease protein predicts a cystine knot growth factor tertiary structure.</title>
        <authorList>
            <person name="Meitinger T."/>
            <person name="Meindl A."/>
            <person name="Bork P."/>
            <person name="Rost B."/>
            <person name="Sander C."/>
            <person name="Haasemann M."/>
            <person name="Murken J."/>
        </authorList>
    </citation>
    <scope>3D-STRUCTURE MODELING</scope>
</reference>
<reference key="10">
    <citation type="journal article" date="2013" name="Genes Dev.">
        <title>Structure and function of Norrin in assembly and activation of a Frizzled 4-Lrp5/6 complex.</title>
        <authorList>
            <person name="Ke J."/>
            <person name="Harikumar K.G."/>
            <person name="Erice C."/>
            <person name="Chen C."/>
            <person name="Gu X."/>
            <person name="Wang L."/>
            <person name="Parker N."/>
            <person name="Cheng Z."/>
            <person name="Xu W."/>
            <person name="Williams B.O."/>
            <person name="Melcher K."/>
            <person name="Miller L.J."/>
            <person name="Xu H.E."/>
        </authorList>
    </citation>
    <scope>X-RAY CRYSTALLOGRAPHY (2.4 ANGSTROMS) OF 30-133</scope>
    <scope>DISULFIDE BONDS</scope>
    <scope>INTERACTION WITH FZD4 AND LRP6</scope>
</reference>
<reference key="11">
    <citation type="journal article" date="1993" name="Hum. Mol. Genet.">
        <title>Identification of two new missense mutations (K58N and R121Q) in the Norrie disease (ND) gene in two Spanish families.</title>
        <authorList>
            <person name="Fuentes J.J."/>
            <person name="Volpini V."/>
            <person name="Fernandez-Toral F."/>
            <person name="Coto E."/>
            <person name="Estivill X."/>
        </authorList>
    </citation>
    <scope>VARIANTS ND ASN-58 AND GLN-121</scope>
</reference>
<reference key="12">
    <citation type="journal article" date="1994" name="Hum. Mol. Genet.">
        <title>A missense point mutation (Leu13Arg) of the Norrie disease gene in a large Cuban kindred with Norrie disease.</title>
        <authorList>
            <person name="Fuchs S."/>
            <person name="Xu S.Y."/>
            <person name="Caballero M."/>
            <person name="Salcedo M."/>
            <person name="Lo A.L."/>
            <person name="Wedemann H."/>
            <person name="Gal A."/>
        </authorList>
    </citation>
    <scope>VARIANT ND ARG-13</scope>
</reference>
<reference key="13">
    <citation type="journal article" date="1994" name="Arch. Ophthalmol.">
        <title>Ocular findings associated with a Cys39Arg mutation in the Norrie disease gene.</title>
        <authorList>
            <person name="Joos K.M."/>
            <person name="Kimura A.E."/>
            <person name="Vandenburgh K."/>
            <person name="Bartley J.A."/>
            <person name="Stone E.M."/>
        </authorList>
    </citation>
    <scope>VARIANT ND ARG-39</scope>
</reference>
<reference key="14">
    <citation type="journal article" date="1992" name="Nat. Genet.">
        <title>Norrie disease is caused by mutations in an extracellular protein resembling C-terminal globular domain of mucins.</title>
        <authorList>
            <person name="Meindl A."/>
            <person name="Berger W."/>
            <person name="Meitinger T."/>
            <person name="van de Pol D."/>
            <person name="Achatz H."/>
            <person name="Dorner C."/>
            <person name="Haasemann M."/>
            <person name="Hellebrand H."/>
            <person name="Gal A."/>
            <person name="Cremers F.P.M."/>
            <person name="Ropers H.-H."/>
        </authorList>
    </citation>
    <scope>VARIANTS ND CYS-44; GLU-60 AND TYR-96</scope>
</reference>
<reference key="15">
    <citation type="journal article" date="1992" name="Hum. Mol. Genet.">
        <title>Mutations in the candidate gene for Norrie disease.</title>
        <authorList>
            <person name="Berger W."/>
            <person name="van de Pol D."/>
            <person name="Warburg M."/>
            <person name="Gal A."/>
            <person name="Bleeker-Wagemakers L."/>
            <person name="de Silva H."/>
            <person name="Meindl A."/>
            <person name="Meitinger T."/>
            <person name="Cremers F.P.M."/>
            <person name="Ropers H.-H."/>
        </authorList>
    </citation>
    <scope>VARIANTS ND PHE-61; CYS-74; CYS-75; PRO-90 AND TYR-96</scope>
</reference>
<reference key="16">
    <citation type="journal article" date="1993" name="Hum. Mol. Genet.">
        <title>Characterization of a mutation within the NDP gene in a family with a manifesting female carrier.</title>
        <authorList>
            <person name="Chen Z.-Y."/>
            <person name="Battinelli E.M."/>
            <person name="Woodruff G."/>
            <person name="Young I."/>
            <person name="Breakefield X.O."/>
            <person name="Craig I.W."/>
        </authorList>
    </citation>
    <scope>VARIANT ND SER-69</scope>
</reference>
<reference key="17">
    <citation type="journal article" date="1993" name="Nat. Genet.">
        <title>A mutation in the Norrie disease gene (NDP) associated with X-linked familial exudative vitreoretinopathy.</title>
        <authorList>
            <person name="Chen Z.-Y."/>
            <person name="Battinelli E.M."/>
            <person name="Fielder A."/>
            <person name="Bundey S."/>
            <person name="Sims K."/>
            <person name="Breakefield X.O."/>
            <person name="Craig I.W."/>
        </authorList>
    </citation>
    <scope>VARIANT EVR2 PHE-124</scope>
</reference>
<reference key="18">
    <citation type="journal article" date="1995" name="Br. J. Ophthalmol.">
        <title>Mutations in the Norrie disease gene: a new mutation in a Japanese family.</title>
        <authorList>
            <person name="Isashiki Y."/>
            <person name="Ohba N."/>
            <person name="Yanagita T."/>
            <person name="Hokita N."/>
            <person name="Hotta Y."/>
            <person name="Hayakawa M."/>
            <person name="Fujiki K."/>
            <person name="Tanabe U."/>
        </authorList>
    </citation>
    <scope>VARIANT ND ARG-95</scope>
</reference>
<reference key="19">
    <citation type="journal article" date="1995" name="Hum. Mutat.">
        <title>Mutations in the Norrie disease gene.</title>
        <authorList>
            <person name="Schuback D.E."/>
            <person name="Chen Z.Y."/>
            <person name="Craig I.W."/>
            <person name="Breakefield X.O."/>
            <person name="Sims K.B."/>
        </authorList>
    </citation>
    <scope>VARIANTS ND PRO-61; ASP-63; TRP-65; ASN-123; 94-HIS--CYS-96 DELINS GLN-CYS-GLY-LEU AND 121-ARG--ILE-123 DEL</scope>
</reference>
<reference key="20">
    <citation type="journal article" date="1995" name="Hum. Mol. Genet.">
        <title>Missense mutations in the NDP gene in patients with a less severe course of Norrie disease.</title>
        <authorList>
            <person name="Meindl A."/>
            <person name="Lorenz B."/>
            <person name="Achatz H."/>
            <person name="Hellebrand H."/>
            <person name="Schmitz-Valckenberg P."/>
            <person name="Meitinger T."/>
        </authorList>
    </citation>
    <scope>VARIANTS ND GLN-104; TRP-121 AND GLN-121</scope>
</reference>
<reference key="21">
    <citation type="journal article" date="1995" name="Hum. Mol. Genet.">
        <title>A novel mutation in the Norrie disease gene predicted to disrupt the cystine knot growth factor motif.</title>
        <authorList>
            <person name="Strasberg P."/>
            <person name="Liede H.A."/>
            <person name="Stein T."/>
            <person name="Warren I."/>
            <person name="Sutherland J."/>
            <person name="Ray P.N."/>
        </authorList>
    </citation>
    <scope>VARIANT ND TYR-65</scope>
</reference>
<reference key="22">
    <citation type="journal article" date="1996" name="Acta Ophthalmol. Scand. Suppl.">
        <title>Norrie-Warburg syndrome: two novel mutations in patients with classical clinical phenotype.</title>
        <authorList>
            <person name="Gal A."/>
            <person name="Veske A."/>
            <person name="Jojart G."/>
            <person name="Grammatico B."/>
            <person name="Huber B."/>
            <person name="Gu S."/>
            <person name="del Porto G."/>
            <person name="Senyi K."/>
        </authorList>
    </citation>
    <scope>VARIANT ND SER-126</scope>
</reference>
<reference key="23">
    <citation type="journal article" date="1996" name="Clin. Genet.">
        <title>X-linked exudative vitreoretinopathy caused by an arginine to leucine substitution (R121L) in the Norrie disease protein.</title>
        <authorList>
            <person name="Johnson K."/>
            <person name="Mintz-Hittner H.A."/>
            <person name="Conley Y.P."/>
            <person name="Ferrell R.E."/>
        </authorList>
    </citation>
    <scope>VARIANT EVR2 LEU-121</scope>
</reference>
<reference key="24">
    <citation type="journal article" date="1996" name="Hum. Mutat.">
        <title>Three novel and two recurrent mutations of the Norrie disease gene in patients with Norrie syndrome.</title>
        <authorList>
            <person name="Fuchs S."/>
            <person name="van de Pol D."/>
            <person name="Beudt U."/>
            <person name="Kellner U."/>
            <person name="Meire F."/>
            <person name="Berger W."/>
            <person name="Gal A."/>
        </authorList>
    </citation>
    <scope>VARIANTS ND CYS-74 AND ARG-110</scope>
</reference>
<reference key="25">
    <citation type="journal article" date="1997" name="Am. J. Med. Genet.">
        <title>Two new missense mutations (A105T and C110G) in the norrin gene in two Italian families with Norrie disease and familial exudative vitreoretinopathy.</title>
        <authorList>
            <person name="Torrente I."/>
            <person name="Mangino M."/>
            <person name="Gennarelli M."/>
            <person name="Novelli G."/>
            <person name="Giannotti A."/>
            <person name="Vadala P."/>
            <person name="Dallapiccola B."/>
        </authorList>
    </citation>
    <scope>VARIANTS ND THR-105 AND GLY-110</scope>
</reference>
<reference key="26">
    <citation type="journal article" date="1997" name="Hum. Mutat.">
        <title>Two new mutations in exon 3 of the NDP gene: S73X and S101F associated with severe and less severe ocular phenotype, respectively.</title>
        <authorList>
            <person name="Walker J.L."/>
            <person name="Dixon J."/>
            <person name="Fenton C.R."/>
            <person name="Hungerford J."/>
            <person name="Lynch S.A."/>
            <person name="Stenhouses S.A.R."/>
            <person name="Christian A."/>
            <person name="Craig I.W."/>
        </authorList>
    </citation>
    <scope>VARIANT ND PHE-101</scope>
</reference>
<reference key="27">
    <citation type="journal article" date="1997" name="Hum. Mutat.">
        <title>Identification of novel missense mutations in the Norrie disease gene associated with one X-linked and four sporadic cases of familial exudative vitreoretinopathy.</title>
        <authorList>
            <person name="Shastry B.S."/>
            <person name="Hejtmancik J.F."/>
            <person name="Trese M.T."/>
        </authorList>
    </citation>
    <scope>VARIANTS EVR2 LYS-41; ARG-42; ASN-58 AND CYS-120</scope>
    <scope>VARIANT RETINOPATHY OF PREMATURITY PRO-108</scope>
</reference>
<reference key="28">
    <citation type="journal article" date="1997" name="Hum. Mutat.">
        <title>Norrie disease gene mutation in a large Costa Rican kindred with a novel phenotype including venous insufficiency.</title>
        <authorList>
            <person name="Rehm H.L."/>
            <person name="Gutierrez-Espeleta G.A."/>
            <person name="Garcia R."/>
            <person name="Jimenez G."/>
            <person name="Khetarpal U."/>
            <person name="Priest J.M."/>
            <person name="Sims K.B."/>
            <person name="Keats B.J.B."/>
            <person name="Morton C.C."/>
        </authorList>
    </citation>
    <scope>VARIANT ND PHE-61</scope>
</reference>
<reference key="29">
    <citation type="journal article" date="1999" name="Eur. J. Ophthalmol.">
        <title>Norrie disease and exudative vitreoretinopathy in families with affected female carriers.</title>
        <authorList>
            <person name="Shastry B.S."/>
            <person name="Hiraoka M."/>
            <person name="Trese D.C."/>
            <person name="Trese M.T."/>
        </authorList>
    </citation>
    <scope>VARIANTS ND TYR-96 AND ASP-118</scope>
</reference>
<reference key="30">
    <citation type="journal article" date="1999" name="Hum. Mol. Genet.">
        <title>Coats' disease of the retina (unilateral retinal telangiectasis) caused by somatic mutation in the NDP gene: a role for norrin in retinal angiogenesis.</title>
        <authorList>
            <person name="Black G.C.M."/>
            <person name="Perveen R."/>
            <person name="Bonshek R."/>
            <person name="Cahill M."/>
            <person name="Clayton-Smith J."/>
            <person name="Lloyd I.C."/>
            <person name="McLeod D."/>
        </authorList>
    </citation>
    <scope>VARIANT ND TRP-96</scope>
</reference>
<reference key="31">
    <citation type="journal article" date="2001" name="Am. J. Med. Genet.">
        <title>Two Thai families with Norrie disease (ND): association of two novel missense mutations with severe ND phenotype, seizures, and a manifesting carrier.</title>
        <authorList>
            <person name="Yamada K."/>
            <person name="Limprasert P."/>
            <person name="Ratanasukon M."/>
            <person name="Tengtrisorn S."/>
            <person name="Yingchareonpukdee J."/>
            <person name="Vasiknanonte P."/>
            <person name="Kitaoka T."/>
            <person name="Ghadami M."/>
            <person name="Niikawa N."/>
            <person name="Kishino T."/>
        </authorList>
    </citation>
    <scope>VARIANTS ND PRO-16 AND PRO-75</scope>
</reference>
<reference key="32">
    <citation type="journal article" date="2003" name="Hum. Mutat.">
        <title>NDP gene mutations in 14 French families with Norrie disease.</title>
        <authorList>
            <person name="Royer G."/>
            <person name="Hanein S."/>
            <person name="Raclin V."/>
            <person name="Gigarel N."/>
            <person name="Rozet J.-M."/>
            <person name="Munnich A."/>
            <person name="Steffann J."/>
            <person name="Dufier J.-L."/>
            <person name="Kaplan J."/>
            <person name="Bonnefont J.-P."/>
        </authorList>
    </citation>
    <scope>VARIANTS ND CYS-38; GLN-43; CYS-44; MET-45; CYS-90 AND ARG-128</scope>
</reference>
<reference key="33">
    <citation type="journal article" date="2004" name="J. Pediatr. Ophthalmol. Strabismus">
        <title>A novel missense Norrie disease mutation associated with a severe ocular phenotype.</title>
        <authorList>
            <person name="Khan A.O."/>
            <person name="Shamsi F.A."/>
            <person name="Al-Saif A."/>
            <person name="Kambouris M."/>
        </authorList>
    </citation>
    <scope>VARIANT ND PHE-95</scope>
</reference>
<reference key="34">
    <citation type="journal article" date="2005" name="Mol. Vis.">
        <title>Genotype-phenotype variations in five Spanish families with Norrie disease or X-linked FEVR.</title>
        <authorList>
            <person name="Riveiro-Alvarez R."/>
            <person name="Trujillo-Tiebas M.J."/>
            <person name="Gimenez-Pardo A."/>
            <person name="Garcia-Hoyos M."/>
            <person name="Cantalapiedra D."/>
            <person name="Lorda-Sanchez I."/>
            <person name="Rodriguez de Alba M."/>
            <person name="Ramos C."/>
            <person name="Ayuso C."/>
        </authorList>
    </citation>
    <scope>VARIANTS EVR2 CYS-38 AND GLN-121</scope>
</reference>
<reference key="35">
    <citation type="journal article" date="2006" name="Clin. Exp. Ophthalmol.">
        <title>Mutations in the NDP gene: contribution to Norrie disease, familial exudative vitreoretinopathy and retinopathy of prematurity.</title>
        <authorList>
            <person name="Dickinson J.L."/>
            <person name="Sale M.M."/>
            <person name="Passmore A."/>
            <person name="FitzGerald L.M."/>
            <person name="Wheatley C.M."/>
            <person name="Burdon K.P."/>
            <person name="Craig J.E."/>
            <person name="Tengtrisorn S."/>
            <person name="Carden S.M."/>
            <person name="Maclean H."/>
            <person name="Mackey D.A."/>
        </authorList>
    </citation>
    <scope>VARIANT EVR2 VAL-103</scope>
    <scope>VARIANT ND ARG-43</scope>
</reference>
<reference key="36">
    <citation type="journal article" date="2006" name="Eye">
        <title>Phenotypic heterogeneity associated with a novel mutation (Gly112Glu) in the Norrie disease protein.</title>
        <authorList>
            <person name="Allen R.C."/>
            <person name="Russell S.R."/>
            <person name="Streb L.M."/>
            <person name="Alsheikheh A."/>
            <person name="Stone E.M."/>
        </authorList>
    </citation>
    <scope>VARIANTS ND CYS-74 AND GLU-112</scope>
</reference>
<reference key="37">
    <citation type="journal article" date="2006" name="Hum. Genet.">
        <title>Gene symbol: NDP. Disease: Norrie disease.</title>
        <authorList>
            <person name="Riveiro-Alvarez R."/>
            <person name="Trujillo M.J."/>
            <person name="Gimenez A."/>
            <person name="Cantalapiedra D."/>
            <person name="Vallespin E."/>
            <person name="Villaverde C."/>
            <person name="Ayuso C."/>
        </authorList>
    </citation>
    <scope>VARIANT ND ASN-104</scope>
</reference>
<reference key="38">
    <citation type="journal article" date="2007" name="Am. J. Med. Genet. A">
        <title>A novel missense mutation in the NDP gene in a child with Norrie disease and severe neurological involvement including infantile spasms.</title>
        <authorList>
            <person name="Lev D."/>
            <person name="Weigl Y."/>
            <person name="Hasan M."/>
            <person name="Gak E."/>
            <person name="Davidovich M."/>
            <person name="Vinkler C."/>
            <person name="Leshinsky-Silver E."/>
            <person name="Lerman-Sagie T."/>
            <person name="Watemberg N."/>
        </authorList>
    </citation>
    <scope>VARIANT ND GLU-45</scope>
</reference>
<reference key="39">
    <citation type="journal article" date="2007" name="Arch. Ophthalmol.">
        <title>Retinal phenotype-genotype correlation of pediatric patients expressing mutations in the Norrie disease gene.</title>
        <authorList>
            <person name="Wu W.-C."/>
            <person name="Drenser K."/>
            <person name="Trese M."/>
            <person name="Capone A. Jr."/>
            <person name="Dailey W."/>
        </authorList>
    </citation>
    <scope>VARIANTS EVR2 ARG-42; ILE-61 AND TRP-121</scope>
    <scope>VARIANTS ND ARG-39 AND TYR-65</scope>
    <scope>VARIANT PERSISTENT FETAL VASCULATURE SYNDROME SER-41</scope>
</reference>
<reference key="40">
    <citation type="journal article" date="2007" name="Invest. Ophthalmol. Vis. Sci.">
        <title>Novel mutations in Norrie disease gene in Japanese patients with Norrie disease and familial exudative vitreoretinopathy.</title>
        <authorList>
            <person name="Kondo H."/>
            <person name="Qin M."/>
            <person name="Kusaka S."/>
            <person name="Tahira T."/>
            <person name="Hasebe H."/>
            <person name="Hayashi H."/>
            <person name="Uchio E."/>
            <person name="Hayashi K."/>
        </authorList>
    </citation>
    <scope>VARIANTS EVR2 LYS-18; ASN-54 AND LEU-115</scope>
    <scope>VARIANT ND PRO-97</scope>
</reference>
<reference key="41">
    <citation type="journal article" date="2010" name="Hum. Mutat.">
        <title>Overview of the mutation spectrum in familial exudative vitreoretinopathy and Norrie disease with identification of 21 novel variants in FZD4, LRP5, and NDP.</title>
        <authorList>
            <person name="Nikopoulos K."/>
            <person name="Venselaar H."/>
            <person name="Collin R.W.J."/>
            <person name="Riveiro-Alvarez R."/>
            <person name="Boonstra F.N."/>
            <person name="Hooymans J.M."/>
            <person name="Mukhopadhyay A."/>
            <person name="Shears D."/>
            <person name="van Bers M."/>
            <person name="de Wijs I.J."/>
            <person name="van Essen A.J."/>
            <person name="Sijmons R.H."/>
            <person name="Tilanus M.A.D."/>
            <person name="van Nouhuys C.E."/>
            <person name="Ayuso C."/>
            <person name="Hoefsloot L.H."/>
            <person name="Cremers F.P.M."/>
        </authorList>
    </citation>
    <scope>VARIANTS ND ARG-55; ARG-67; GLU-67; LEU-89; PRO-92 AND LEU-98</scope>
</reference>
<reference key="42">
    <citation type="journal article" date="2017" name="Invest. Ophthalmol. Vis. Sci.">
        <title>The Genetic Causes of Nonsyndromic Congenital Retinal Detachment: A Genetic and Phenotypic Study of Pakistani Families.</title>
        <authorList>
            <person name="Keser V."/>
            <person name="Khan A."/>
            <person name="Siddiqui S."/>
            <person name="Lopez I."/>
            <person name="Ren H."/>
            <person name="Qamar R."/>
            <person name="Nadaf J."/>
            <person name="Majewski J."/>
            <person name="Chen R."/>
            <person name="Koenekoop R.K."/>
        </authorList>
    </citation>
    <scope>VARIANT ND GLY-69</scope>
</reference>
<proteinExistence type="evidence at protein level"/>
<name>NDP_HUMAN</name>
<feature type="signal peptide" evidence="1">
    <location>
        <begin position="1"/>
        <end position="24"/>
    </location>
</feature>
<feature type="chain" id="PRO_0000021794" description="Norrin">
    <location>
        <begin position="25"/>
        <end position="133"/>
    </location>
</feature>
<feature type="domain" description="CTCK" evidence="2">
    <location>
        <begin position="39"/>
        <end position="132"/>
    </location>
</feature>
<feature type="disulfide bond" evidence="19">
    <location>
        <begin position="39"/>
        <end position="96"/>
    </location>
</feature>
<feature type="disulfide bond" evidence="19">
    <location>
        <begin position="55"/>
        <end position="110"/>
    </location>
</feature>
<feature type="disulfide bond" evidence="19">
    <location>
        <begin position="65"/>
        <end position="126"/>
    </location>
</feature>
<feature type="disulfide bond" evidence="19">
    <location>
        <begin position="69"/>
        <end position="128"/>
    </location>
</feature>
<feature type="disulfide bond" description="Interchain (with C-95)" evidence="19">
    <location>
        <position position="93"/>
    </location>
</feature>
<feature type="disulfide bond" description="Interchain (with C-93)" evidence="19">
    <location>
        <position position="95"/>
    </location>
</feature>
<feature type="disulfide bond" description="Interchain" evidence="19">
    <location>
        <position position="131"/>
    </location>
</feature>
<feature type="sequence variant" id="VAR_005478" description="In ND; dbSNP:rs104894879." evidence="25">
    <original>L</original>
    <variation>R</variation>
    <location>
        <position position="13"/>
    </location>
</feature>
<feature type="sequence variant" id="VAR_016048" description="In ND." evidence="6">
    <original>L</original>
    <variation>P</variation>
    <location>
        <position position="16"/>
    </location>
</feature>
<feature type="sequence variant" id="VAR_063998" description="In EVR2; the patient presented significant phenotypic heterogeneity between the two eyes." evidence="16">
    <original>I</original>
    <variation>K</variation>
    <location>
        <position position="18"/>
    </location>
</feature>
<feature type="sequence variant" id="VAR_034137" description="In dbSNP:rs5952410.">
    <original>D</original>
    <variation>E</variation>
    <location>
        <position position="23"/>
    </location>
</feature>
<feature type="sequence variant" id="VAR_063999" description="In ND and EVR2; dbSNP:rs758550101." evidence="9 12">
    <original>R</original>
    <variation>C</variation>
    <location>
        <position position="38"/>
    </location>
</feature>
<feature type="sequence variant" id="VAR_005479" description="In ND." evidence="15 24">
    <original>C</original>
    <variation>R</variation>
    <location>
        <position position="39"/>
    </location>
</feature>
<feature type="sequence variant" id="VAR_005480" description="In EVR2." evidence="34">
    <original>R</original>
    <variation>K</variation>
    <location>
        <position position="41"/>
    </location>
</feature>
<feature type="sequence variant" id="VAR_064000" description="In persistent fetal vasculature syndrome." evidence="15">
    <original>R</original>
    <variation>S</variation>
    <location>
        <position position="41"/>
    </location>
</feature>
<feature type="sequence variant" id="VAR_005481" description="In EVR2; dbSNP:rs104894874." evidence="15 34">
    <original>H</original>
    <variation>R</variation>
    <location>
        <position position="42"/>
    </location>
</feature>
<feature type="sequence variant" id="VAR_064001" description="In ND." evidence="9">
    <original>H</original>
    <variation>Q</variation>
    <location>
        <position position="43"/>
    </location>
</feature>
<feature type="sequence variant" id="VAR_064002" description="In ND." evidence="13">
    <original>H</original>
    <variation>R</variation>
    <location>
        <position position="43"/>
    </location>
</feature>
<feature type="sequence variant" id="VAR_005482" description="In ND; dbSNP:rs104894870." evidence="7 9">
    <original>Y</original>
    <variation>C</variation>
    <location>
        <position position="44"/>
    </location>
</feature>
<feature type="sequence variant" id="VAR_064003" description="In ND; dbSNP:rs137852221." evidence="17">
    <original>V</original>
    <variation>E</variation>
    <location>
        <position position="45"/>
    </location>
</feature>
<feature type="sequence variant" id="VAR_064004" description="In ND." evidence="9">
    <original>V</original>
    <variation>M</variation>
    <location>
        <position position="45"/>
    </location>
</feature>
<feature type="sequence variant" id="VAR_064005" description="In EVR2." evidence="16">
    <original>K</original>
    <variation>N</variation>
    <location>
        <position position="54"/>
    </location>
</feature>
<feature type="sequence variant" id="VAR_064006" description="In ND." evidence="18">
    <original>C</original>
    <variation>R</variation>
    <location>
        <position position="55"/>
    </location>
</feature>
<feature type="sequence variant" id="VAR_005483" description="In ND and EVR2." evidence="28 34">
    <original>K</original>
    <variation>N</variation>
    <location>
        <position position="58"/>
    </location>
</feature>
<feature type="sequence variant" id="VAR_005484" description="In ND; reduction of protein amount in the extracellular matrix; dbSNP:rs104894869." evidence="7 37">
    <original>V</original>
    <variation>E</variation>
    <location>
        <position position="60"/>
    </location>
</feature>
<feature type="sequence variant" id="VAR_005485" description="In ND; dbSNP:rs104894880." evidence="8 35">
    <original>L</original>
    <variation>F</variation>
    <location>
        <position position="61"/>
    </location>
</feature>
<feature type="sequence variant" id="VAR_064007" description="In EVR2." evidence="15">
    <original>L</original>
    <variation>I</variation>
    <location>
        <position position="61"/>
    </location>
</feature>
<feature type="sequence variant" id="VAR_005486" description="In ND." evidence="21">
    <original>L</original>
    <variation>P</variation>
    <location>
        <position position="61"/>
    </location>
</feature>
<feature type="sequence variant" id="VAR_005487" description="In ND." evidence="21">
    <original>A</original>
    <variation>D</variation>
    <location>
        <position position="63"/>
    </location>
</feature>
<feature type="sequence variant" id="VAR_005490" description="In ND." evidence="21">
    <original>C</original>
    <variation>W</variation>
    <location>
        <position position="65"/>
    </location>
</feature>
<feature type="sequence variant" id="VAR_005488" description="In ND; dbSNP:rs1369490553." evidence="15 29">
    <original>C</original>
    <variation>Y</variation>
    <location>
        <position position="65"/>
    </location>
</feature>
<feature type="sequence variant" id="VAR_064008" description="In ND; dbSNP:rs1460859456." evidence="18">
    <original>G</original>
    <variation>E</variation>
    <location>
        <position position="67"/>
    </location>
</feature>
<feature type="sequence variant" id="VAR_064009" description="In ND." evidence="18">
    <original>G</original>
    <variation>R</variation>
    <location>
        <position position="67"/>
    </location>
</feature>
<feature type="sequence variant" id="VAR_085735" description="In ND; uncertain significance." evidence="20">
    <original>C</original>
    <variation>G</variation>
    <location>
        <position position="69"/>
    </location>
</feature>
<feature type="sequence variant" id="VAR_005489" description="In ND; uncertain significance; dbSNP:rs104894872." evidence="27">
    <original>C</original>
    <variation>S</variation>
    <location>
        <position position="69"/>
    </location>
</feature>
<feature type="sequence variant" id="VAR_005491" description="In ND; dbSNP:rs727504031." evidence="8 11 31">
    <original>R</original>
    <variation>C</variation>
    <location>
        <position position="74"/>
    </location>
</feature>
<feature type="sequence variant" id="VAR_005492" description="In ND; dbSNP:rs104894868." evidence="8">
    <original>S</original>
    <variation>C</variation>
    <location>
        <position position="75"/>
    </location>
</feature>
<feature type="sequence variant" id="VAR_016049" description="In ND." evidence="6">
    <original>S</original>
    <variation>P</variation>
    <location>
        <position position="75"/>
    </location>
</feature>
<feature type="sequence variant" id="VAR_064010" description="In ND; dbSNP:rs1057520333." evidence="18">
    <original>F</original>
    <variation>L</variation>
    <location>
        <position position="89"/>
    </location>
</feature>
<feature type="sequence variant" id="VAR_064011" description="In ND; dbSNP:rs1057518793." evidence="9">
    <original>R</original>
    <variation>C</variation>
    <location>
        <position position="90"/>
    </location>
</feature>
<feature type="sequence variant" id="VAR_005494" description="In ND; dbSNP:rs104894867." evidence="8">
    <original>R</original>
    <variation>P</variation>
    <location>
        <position position="90"/>
    </location>
</feature>
<feature type="sequence variant" id="VAR_064012" description="In ND." evidence="18">
    <original>S</original>
    <variation>P</variation>
    <location>
        <position position="92"/>
    </location>
</feature>
<feature type="sequence variant" id="VAR_005495" description="In ND." evidence="21">
    <original>HCC</original>
    <variation>QCGL</variation>
    <location>
        <begin position="94"/>
        <end position="96"/>
    </location>
</feature>
<feature type="sequence variant" id="VAR_064013" description="In ND." evidence="10">
    <original>C</original>
    <variation>F</variation>
    <location>
        <position position="95"/>
    </location>
</feature>
<feature type="sequence variant" id="VAR_064014" description="In ND." evidence="22">
    <original>C</original>
    <variation>R</variation>
    <location>
        <position position="95"/>
    </location>
</feature>
<feature type="sequence variant" id="VAR_009275" description="In ND; dbSNP:rs104894877." evidence="4">
    <original>C</original>
    <variation>W</variation>
    <location>
        <position position="96"/>
    </location>
</feature>
<feature type="sequence variant" id="VAR_005496" description="In ND; dbSNP:rs104894871." evidence="5 7 8">
    <original>C</original>
    <variation>Y</variation>
    <location>
        <position position="96"/>
    </location>
</feature>
<feature type="sequence variant" id="VAR_064015" description="In ND." evidence="16">
    <original>R</original>
    <variation>P</variation>
    <location>
        <position position="97"/>
    </location>
</feature>
<feature type="sequence variant" id="VAR_064016" description="In ND." evidence="18">
    <original>P</original>
    <variation>L</variation>
    <location>
        <position position="98"/>
    </location>
</feature>
<feature type="sequence variant" id="VAR_005497" description="In ND; dbSNP:rs104894883." evidence="33">
    <original>S</original>
    <variation>F</variation>
    <location>
        <position position="101"/>
    </location>
</feature>
<feature type="sequence variant" id="VAR_064017" description="In EVR2." evidence="13">
    <original>L</original>
    <variation>V</variation>
    <location>
        <position position="103"/>
    </location>
</feature>
<feature type="sequence variant" id="VAR_064018" description="In ND." evidence="14">
    <original>K</original>
    <variation>N</variation>
    <location>
        <position position="104"/>
    </location>
</feature>
<feature type="sequence variant" id="VAR_005498" description="In ND." evidence="23">
    <original>K</original>
    <variation>Q</variation>
    <location>
        <position position="104"/>
    </location>
</feature>
<feature type="sequence variant" id="VAR_016050" description="In ND; dbSNP:rs104894875." evidence="36">
    <original>A</original>
    <variation>T</variation>
    <location>
        <position position="105"/>
    </location>
</feature>
<feature type="sequence variant" id="VAR_064019" description="In retinopathy of prematurity." evidence="34">
    <original>L</original>
    <variation>P</variation>
    <location>
        <position position="108"/>
    </location>
</feature>
<feature type="sequence variant" id="VAR_016051" description="In ND; dbSNP:rs104894876." evidence="36">
    <original>C</original>
    <variation>G</variation>
    <location>
        <position position="110"/>
    </location>
</feature>
<feature type="sequence variant" id="VAR_064020" description="In ND." evidence="31">
    <original>C</original>
    <variation>R</variation>
    <location>
        <position position="110"/>
    </location>
</feature>
<feature type="sequence variant" id="VAR_064021" description="In ND." evidence="11">
    <original>G</original>
    <variation>E</variation>
    <location>
        <position position="112"/>
    </location>
</feature>
<feature type="sequence variant" id="VAR_064022" description="In EVR2." evidence="16">
    <original>R</original>
    <variation>L</variation>
    <location>
        <position position="115"/>
    </location>
</feature>
<feature type="sequence variant" id="VAR_064023" description="In ND." evidence="5">
    <original>A</original>
    <variation>D</variation>
    <location>
        <position position="118"/>
    </location>
</feature>
<feature type="sequence variant" id="VAR_005499" description="In EVR2." evidence="34">
    <original>Y</original>
    <variation>C</variation>
    <location>
        <position position="120"/>
    </location>
</feature>
<feature type="sequence variant" id="VAR_005503" description="In ND." evidence="21">
    <location>
        <begin position="121"/>
        <end position="123"/>
    </location>
</feature>
<feature type="sequence variant" id="VAR_005500" description="In EVR2.">
    <original>R</original>
    <variation>G</variation>
    <location>
        <position position="121"/>
    </location>
</feature>
<feature type="sequence variant" id="VAR_064024" description="In EVR2; dbSNP:rs137852220." evidence="32">
    <original>R</original>
    <variation>L</variation>
    <location>
        <position position="121"/>
    </location>
</feature>
<feature type="sequence variant" id="VAR_005501" description="In EVR2 and ND; reduced amount of protein in the extracellular matrix." evidence="12 23 28 37">
    <original>R</original>
    <variation>Q</variation>
    <location>
        <position position="121"/>
    </location>
</feature>
<feature type="sequence variant" id="VAR_005502" description="In ND and EVR2; dbSNP:rs104894878." evidence="15 23">
    <original>R</original>
    <variation>W</variation>
    <location>
        <position position="121"/>
    </location>
</feature>
<feature type="sequence variant" id="VAR_005504" description="In ND." evidence="21">
    <original>I</original>
    <variation>N</variation>
    <location>
        <position position="123"/>
    </location>
</feature>
<feature type="sequence variant" id="VAR_005505" description="In EVR2; dbSNP:rs28933684." evidence="26">
    <original>L</original>
    <variation>F</variation>
    <location>
        <position position="124"/>
    </location>
</feature>
<feature type="sequence variant" id="VAR_064025" description="In ND." evidence="30">
    <original>C</original>
    <variation>S</variation>
    <location>
        <position position="126"/>
    </location>
</feature>
<feature type="sequence variant" id="VAR_064026" description="In ND." evidence="9">
    <original>C</original>
    <variation>R</variation>
    <location>
        <position position="128"/>
    </location>
</feature>
<feature type="mutagenesis site" description="Impairs oligomerization." evidence="37">
    <original>C</original>
    <variation>A</variation>
    <location>
        <position position="95"/>
    </location>
</feature>
<feature type="strand" evidence="38">
    <location>
        <begin position="37"/>
        <end position="48"/>
    </location>
</feature>
<feature type="strand" evidence="38">
    <location>
        <begin position="51"/>
        <end position="53"/>
    </location>
</feature>
<feature type="strand" evidence="38">
    <location>
        <begin position="58"/>
        <end position="67"/>
    </location>
</feature>
<feature type="strand" evidence="38">
    <location>
        <begin position="73"/>
        <end position="77"/>
    </location>
</feature>
<feature type="strand" evidence="39">
    <location>
        <begin position="80"/>
        <end position="83"/>
    </location>
</feature>
<feature type="strand" evidence="38">
    <location>
        <begin position="89"/>
        <end position="92"/>
    </location>
</feature>
<feature type="strand" evidence="38">
    <location>
        <begin position="94"/>
        <end position="110"/>
    </location>
</feature>
<feature type="turn" evidence="38">
    <location>
        <begin position="111"/>
        <end position="113"/>
    </location>
</feature>
<feature type="strand" evidence="38">
    <location>
        <begin position="115"/>
        <end position="133"/>
    </location>
</feature>
<keyword id="KW-0002">3D-structure</keyword>
<keyword id="KW-0209">Deafness</keyword>
<keyword id="KW-0225">Disease variant</keyword>
<keyword id="KW-1015">Disulfide bond</keyword>
<keyword id="KW-1267">Proteomics identification</keyword>
<keyword id="KW-1185">Reference proteome</keyword>
<keyword id="KW-0964">Secreted</keyword>
<keyword id="KW-0716">Sensory transduction</keyword>
<keyword id="KW-0732">Signal</keyword>
<keyword id="KW-0844">Vision</keyword>
<keyword id="KW-0879">Wnt signaling pathway</keyword>
<protein>
    <recommendedName>
        <fullName>Norrin</fullName>
    </recommendedName>
    <alternativeName>
        <fullName>Norrie disease protein</fullName>
    </alternativeName>
    <alternativeName>
        <fullName>X-linked exudative vitreoretinopathy 2 protein</fullName>
    </alternativeName>
</protein>
<comment type="function">
    <text>Activates the canonical Wnt signaling pathway through FZD4 and LRP5 coreceptor. Plays a central role in retinal vascularization by acting as a ligand for FZD4 that signals via stabilizing beta-catenin (CTNNB1) and activating LEF/TCF-mediated transcriptional programs. Acts in concert with TSPAN12 to activate FZD4 independently of the Wnt-dependent activation of FZD4, suggesting the existence of a Wnt-independent signaling that also promote accumulation the beta-catenin (CTNNB1). May be involved in a pathway that regulates neural cell differentiation and proliferation. Possible role in neuroectodermal cell-cell interaction.</text>
</comment>
<comment type="subunit">
    <text evidence="19">Homodimer; disulfide-linked. Component of a complex, at least composed of TSPAN12, FZD4, LRP5/6 and norrin (NDP). Binds FZD4 with high affinity. Interacts with LRP6 (via Beta-propellers 1 and 2).</text>
</comment>
<comment type="interaction">
    <interactant intactId="EBI-2466352">
        <id>Q00604</id>
    </interactant>
    <interactant intactId="EBI-2466380">
        <id>Q9ULV1</id>
        <label>FZD4</label>
    </interactant>
    <organismsDiffer>false</organismsDiffer>
    <experiments>4</experiments>
</comment>
<comment type="subcellular location">
    <subcellularLocation>
        <location evidence="37">Secreted</location>
    </subcellularLocation>
</comment>
<comment type="tissue specificity">
    <text evidence="3">Expressed in the outer nuclear, inner nuclear and ganglion cell layers of the retina, and in fetal and adult brain.</text>
</comment>
<comment type="disease" evidence="4 5 6 7 8 9 10 11 13 14 15 16 17 18 20 21 22 23 24 25 27 28 29 30 31 33 35 36 37">
    <disease id="DI-02079">
        <name>Norrie disease</name>
        <acronym>ND</acronym>
        <description>Recessive disorder characterized by very early childhood blindness due to degenerative and proliferative changes of the neuroretina. Approximately 50% of patients show some form of progressive mental disorder, often with psychotic features, and about one-third of patients develop sensorineural deafness in the second decade. In addition, some patients have more complex phenotypes, including growth failure and seizure.</description>
        <dbReference type="MIM" id="310600"/>
    </disease>
    <text>The disease is caused by variants affecting the gene represented in this entry.</text>
</comment>
<comment type="disease" evidence="12 13 15 16 26 32 34">
    <disease id="DI-01127">
        <name>Vitreoretinopathy, exudative 2</name>
        <acronym>EVR2</acronym>
        <description>A disorder of the retinal vasculature characterized by an abrupt cessation of growth of peripheral capillaries, leading to an avascular peripheral retina. This may lead to compensatory retinal neovascularization, which is thought to be induced by hypoxia from the initial avascular insult. New vessels are prone to leakage and rupture causing exudates and bleeding, followed by scarring, retinal detachment and blindness. Clinical features can be highly variable, even within the same family. Patients with mild forms of the disease are asymptomatic, and their only disease related abnormality is an arc of avascular retina in the extreme temporal periphery.</description>
        <dbReference type="MIM" id="305390"/>
    </disease>
    <text>The disease is caused by variants affecting the gene represented in this entry.</text>
</comment>
<organism>
    <name type="scientific">Homo sapiens</name>
    <name type="common">Human</name>
    <dbReference type="NCBI Taxonomy" id="9606"/>
    <lineage>
        <taxon>Eukaryota</taxon>
        <taxon>Metazoa</taxon>
        <taxon>Chordata</taxon>
        <taxon>Craniata</taxon>
        <taxon>Vertebrata</taxon>
        <taxon>Euteleostomi</taxon>
        <taxon>Mammalia</taxon>
        <taxon>Eutheria</taxon>
        <taxon>Euarchontoglires</taxon>
        <taxon>Primates</taxon>
        <taxon>Haplorrhini</taxon>
        <taxon>Catarrhini</taxon>
        <taxon>Hominidae</taxon>
        <taxon>Homo</taxon>
    </lineage>
</organism>
<sequence length="133" mass="15044">MRKHVLAASFSMLSLLVIMGDTDSKTDSSFIMDSDPRRCMRHHYVDSISHPLYKCSSKMVLLARCEGHCSQASRSEPLVSFSTVLKQPFRSSCHCCRPQTSKLKALRLRCSGGMRLTATYRYILSCHCEECNS</sequence>